<dbReference type="EMBL" id="DS469607">
    <property type="protein sequence ID" value="EDO39430.1"/>
    <property type="molecule type" value="Genomic_DNA"/>
</dbReference>
<dbReference type="SMR" id="A7SA47"/>
<dbReference type="FunCoup" id="A7SA47">
    <property type="interactions" value="933"/>
</dbReference>
<dbReference type="STRING" id="45351.A7SA47"/>
<dbReference type="MEROPS" id="M67.971"/>
<dbReference type="EnsemblMetazoa" id="EDO39430">
    <property type="protein sequence ID" value="EDO39430"/>
    <property type="gene ID" value="NEMVEDRAFT_v1g168210"/>
</dbReference>
<dbReference type="KEGG" id="nve:5511049"/>
<dbReference type="eggNOG" id="KOG1560">
    <property type="taxonomic scope" value="Eukaryota"/>
</dbReference>
<dbReference type="HOGENOM" id="CLU_044094_0_0_1"/>
<dbReference type="InParanoid" id="A7SA47"/>
<dbReference type="OMA" id="WYQSTYF"/>
<dbReference type="OrthoDB" id="10265695at2759"/>
<dbReference type="PhylomeDB" id="A7SA47"/>
<dbReference type="Proteomes" id="UP000001593">
    <property type="component" value="Unassembled WGS sequence"/>
</dbReference>
<dbReference type="GO" id="GO:0016282">
    <property type="term" value="C:eukaryotic 43S preinitiation complex"/>
    <property type="evidence" value="ECO:0000318"/>
    <property type="project" value="GO_Central"/>
</dbReference>
<dbReference type="GO" id="GO:0033290">
    <property type="term" value="C:eukaryotic 48S preinitiation complex"/>
    <property type="evidence" value="ECO:0007669"/>
    <property type="project" value="UniProtKB-UniRule"/>
</dbReference>
<dbReference type="GO" id="GO:0005852">
    <property type="term" value="C:eukaryotic translation initiation factor 3 complex"/>
    <property type="evidence" value="ECO:0000318"/>
    <property type="project" value="GO_Central"/>
</dbReference>
<dbReference type="GO" id="GO:0008237">
    <property type="term" value="F:metallopeptidase activity"/>
    <property type="evidence" value="ECO:0000318"/>
    <property type="project" value="GO_Central"/>
</dbReference>
<dbReference type="GO" id="GO:0003743">
    <property type="term" value="F:translation initiation factor activity"/>
    <property type="evidence" value="ECO:0007669"/>
    <property type="project" value="UniProtKB-UniRule"/>
</dbReference>
<dbReference type="GO" id="GO:0001732">
    <property type="term" value="P:formation of cytoplasmic translation initiation complex"/>
    <property type="evidence" value="ECO:0007669"/>
    <property type="project" value="UniProtKB-UniRule"/>
</dbReference>
<dbReference type="GO" id="GO:0006413">
    <property type="term" value="P:translational initiation"/>
    <property type="evidence" value="ECO:0000318"/>
    <property type="project" value="GO_Central"/>
</dbReference>
<dbReference type="CDD" id="cd08065">
    <property type="entry name" value="MPN_eIF3h"/>
    <property type="match status" value="1"/>
</dbReference>
<dbReference type="FunFam" id="3.40.140.10:FF:000045">
    <property type="entry name" value="Eukaryotic translation initiation factor 3 subunit H"/>
    <property type="match status" value="1"/>
</dbReference>
<dbReference type="Gene3D" id="3.40.140.10">
    <property type="entry name" value="Cytidine Deaminase, domain 2"/>
    <property type="match status" value="1"/>
</dbReference>
<dbReference type="HAMAP" id="MF_03007">
    <property type="entry name" value="eIF3h"/>
    <property type="match status" value="1"/>
</dbReference>
<dbReference type="InterPro" id="IPR027524">
    <property type="entry name" value="eIF3h"/>
</dbReference>
<dbReference type="InterPro" id="IPR045810">
    <property type="entry name" value="eIF3h_C"/>
</dbReference>
<dbReference type="InterPro" id="IPR000555">
    <property type="entry name" value="JAMM/MPN+_dom"/>
</dbReference>
<dbReference type="InterPro" id="IPR050242">
    <property type="entry name" value="JAMM_MPN+_peptidase_M67A"/>
</dbReference>
<dbReference type="InterPro" id="IPR037518">
    <property type="entry name" value="MPN"/>
</dbReference>
<dbReference type="PANTHER" id="PTHR10410">
    <property type="entry name" value="EUKARYOTIC TRANSLATION INITIATION FACTOR 3 -RELATED"/>
    <property type="match status" value="1"/>
</dbReference>
<dbReference type="Pfam" id="PF19445">
    <property type="entry name" value="eIF3h_C"/>
    <property type="match status" value="1"/>
</dbReference>
<dbReference type="Pfam" id="PF01398">
    <property type="entry name" value="JAB"/>
    <property type="match status" value="1"/>
</dbReference>
<dbReference type="SMART" id="SM00232">
    <property type="entry name" value="JAB_MPN"/>
    <property type="match status" value="1"/>
</dbReference>
<dbReference type="PROSITE" id="PS50249">
    <property type="entry name" value="MPN"/>
    <property type="match status" value="1"/>
</dbReference>
<feature type="chain" id="PRO_0000365195" description="Eukaryotic translation initiation factor 3 subunit H">
    <location>
        <begin position="1"/>
        <end position="332"/>
    </location>
</feature>
<feature type="domain" description="MPN" evidence="2">
    <location>
        <begin position="18"/>
        <end position="153"/>
    </location>
</feature>
<feature type="region of interest" description="Disordered" evidence="3">
    <location>
        <begin position="251"/>
        <end position="285"/>
    </location>
</feature>
<sequence>MAEGRSSKNSPSGQIDIVQVDGLTVLKIIKHCEEEGSSGDLVQGVLLGLIQDNRLEITNCFPFPSNKAGDDEDDDDVNYQMEVMRRLRAVNIDHLHVGWYQSTYLGSYINRTLLDSQYSYQKSIEESVVLIYDPLRTSQGMLTLKAFRLSDEMMKLYKDGEFSADKLSKAGISFHSMFQEIPLVIKNSSLMNVLLCELDENTPTPSADQFLTLSTGSYLEKNVRVLMESVDELCQDSNKYHNYQRSVIRQQQQKENYLQRRQQENQSRIQRGEDPLPDEDLSKMFKPLPVPSRLDNLLLSEQVNTYCQHVHQFSTQSFGKFFLAQALQDKKE</sequence>
<organism>
    <name type="scientific">Nematostella vectensis</name>
    <name type="common">Starlet sea anemone</name>
    <dbReference type="NCBI Taxonomy" id="45351"/>
    <lineage>
        <taxon>Eukaryota</taxon>
        <taxon>Metazoa</taxon>
        <taxon>Cnidaria</taxon>
        <taxon>Anthozoa</taxon>
        <taxon>Hexacorallia</taxon>
        <taxon>Actiniaria</taxon>
        <taxon>Edwardsiidae</taxon>
        <taxon>Nematostella</taxon>
    </lineage>
</organism>
<proteinExistence type="inferred from homology"/>
<reference key="1">
    <citation type="journal article" date="2007" name="Science">
        <title>Sea anemone genome reveals ancestral eumetazoan gene repertoire and genomic organization.</title>
        <authorList>
            <person name="Putnam N.H."/>
            <person name="Srivastava M."/>
            <person name="Hellsten U."/>
            <person name="Dirks B."/>
            <person name="Chapman J."/>
            <person name="Salamov A."/>
            <person name="Terry A."/>
            <person name="Shapiro H."/>
            <person name="Lindquist E."/>
            <person name="Kapitonov V.V."/>
            <person name="Jurka J."/>
            <person name="Genikhovich G."/>
            <person name="Grigoriev I.V."/>
            <person name="Lucas S.M."/>
            <person name="Steele R.E."/>
            <person name="Finnerty J.R."/>
            <person name="Technau U."/>
            <person name="Martindale M.Q."/>
            <person name="Rokhsar D.S."/>
        </authorList>
    </citation>
    <scope>NUCLEOTIDE SEQUENCE [LARGE SCALE GENOMIC DNA]</scope>
    <source>
        <strain>CH2 X CH6</strain>
    </source>
</reference>
<name>EIF3H_NEMVE</name>
<keyword id="KW-0963">Cytoplasm</keyword>
<keyword id="KW-0396">Initiation factor</keyword>
<keyword id="KW-0648">Protein biosynthesis</keyword>
<keyword id="KW-1185">Reference proteome</keyword>
<accession>A7SA47</accession>
<evidence type="ECO:0000255" key="1">
    <source>
        <dbReference type="HAMAP-Rule" id="MF_03007"/>
    </source>
</evidence>
<evidence type="ECO:0000255" key="2">
    <source>
        <dbReference type="PROSITE-ProRule" id="PRU01182"/>
    </source>
</evidence>
<evidence type="ECO:0000256" key="3">
    <source>
        <dbReference type="SAM" id="MobiDB-lite"/>
    </source>
</evidence>
<protein>
    <recommendedName>
        <fullName evidence="1">Eukaryotic translation initiation factor 3 subunit H</fullName>
        <shortName evidence="1">eIF3h</shortName>
    </recommendedName>
</protein>
<gene>
    <name type="ORF">v1g168210</name>
</gene>
<comment type="function">
    <text evidence="1">Component of the eukaryotic translation initiation factor 3 (eIF-3) complex, which is involved in protein synthesis of a specialized repertoire of mRNAs and, together with other initiation factors, stimulates binding of mRNA and methionyl-tRNAi to the 40S ribosome. The eIF-3 complex specifically targets and initiates translation of a subset of mRNAs involved in cell proliferation.</text>
</comment>
<comment type="subunit">
    <text evidence="1">Component of the eukaryotic translation initiation factor 3 (eIF-3) complex.</text>
</comment>
<comment type="subcellular location">
    <subcellularLocation>
        <location evidence="1">Cytoplasm</location>
    </subcellularLocation>
</comment>
<comment type="similarity">
    <text evidence="1">Belongs to the eIF-3 subunit H family.</text>
</comment>